<comment type="function">
    <text evidence="1 2 3">Transcription factor that binds to the promoter and the enhancer regions of target genes. Binds to the enhancer element PRE-I (positive regulatory element-I) of the IL-4 gene. Binds to the promoter and the enhancer of the immunoglobulin heavy chain. Binds to GPE1, a cis-acting element in the G-CSF gene promoter.</text>
</comment>
<comment type="subunit">
    <text evidence="1 3">Binds DNA as a dimer and can form stable heterodimers with CEBPA and CEBPB. Interacts with ZNF638; this interaction increases transcriptional activation.</text>
</comment>
<comment type="subcellular location">
    <subcellularLocation>
        <location evidence="4">Nucleus</location>
    </subcellularLocation>
</comment>
<comment type="similarity">
    <text evidence="6">Belongs to the bZIP family. C/EBP subfamily.</text>
</comment>
<sequence length="149" mass="16386">MSKVSQQNSTPGVNGISVIHTQAHASGLQQVPQLVPAGPGGGGKAVPPSKQSKKSSPMDRNSDEYRQRRERNNMAVKKSRLKSKQKAQDTLQRVNQLKEENERLEAKIKLLTKELSVLKDLFLEHAHNLADNVQPSSTENTTNPDKAGQ</sequence>
<dbReference type="EMBL" id="BC102461">
    <property type="protein sequence ID" value="AAI02462.1"/>
    <property type="molecule type" value="mRNA"/>
</dbReference>
<dbReference type="RefSeq" id="NP_001029973.1">
    <property type="nucleotide sequence ID" value="NM_001034801.1"/>
</dbReference>
<dbReference type="RefSeq" id="XP_010813108.1">
    <property type="nucleotide sequence ID" value="XM_010814806.4"/>
</dbReference>
<dbReference type="SMR" id="Q3T0B9"/>
<dbReference type="FunCoup" id="Q3T0B9">
    <property type="interactions" value="429"/>
</dbReference>
<dbReference type="PaxDb" id="9913-ENSBTAP00000023345"/>
<dbReference type="Ensembl" id="ENSBTAT00000090558.1">
    <property type="protein sequence ID" value="ENSBTAP00000097965.1"/>
    <property type="gene ID" value="ENSBTAG00000065176.1"/>
</dbReference>
<dbReference type="Ensembl" id="ENSBTAT00000100808.1">
    <property type="protein sequence ID" value="ENSBTAP00000091466.1"/>
    <property type="gene ID" value="ENSBTAG00000065176.1"/>
</dbReference>
<dbReference type="Ensembl" id="ENSBTAT00000115494.1">
    <property type="protein sequence ID" value="ENSBTAP00000078484.1"/>
    <property type="gene ID" value="ENSBTAG00000065176.1"/>
</dbReference>
<dbReference type="Ensembl" id="ENSBTAT00000122014.1">
    <property type="protein sequence ID" value="ENSBTAP00000090525.1"/>
    <property type="gene ID" value="ENSBTAG00000065176.1"/>
</dbReference>
<dbReference type="Ensembl" id="ENSBTAT00000129848.1">
    <property type="protein sequence ID" value="ENSBTAP00000096842.1"/>
    <property type="gene ID" value="ENSBTAG00000065176.1"/>
</dbReference>
<dbReference type="GeneID" id="617530"/>
<dbReference type="KEGG" id="bta:617530"/>
<dbReference type="CTD" id="1054"/>
<dbReference type="eggNOG" id="KOG3119">
    <property type="taxonomic scope" value="Eukaryota"/>
</dbReference>
<dbReference type="GeneTree" id="ENSGT00940000160676"/>
<dbReference type="HOGENOM" id="CLU_146813_0_0_1"/>
<dbReference type="InParanoid" id="Q3T0B9"/>
<dbReference type="OrthoDB" id="10039716at2759"/>
<dbReference type="TreeFam" id="TF105009"/>
<dbReference type="Proteomes" id="UP000009136">
    <property type="component" value="Chromosome 18"/>
</dbReference>
<dbReference type="GO" id="GO:0005654">
    <property type="term" value="C:nucleoplasm"/>
    <property type="evidence" value="ECO:0007669"/>
    <property type="project" value="Ensembl"/>
</dbReference>
<dbReference type="GO" id="GO:0090575">
    <property type="term" value="C:RNA polymerase II transcription regulator complex"/>
    <property type="evidence" value="ECO:0007669"/>
    <property type="project" value="Ensembl"/>
</dbReference>
<dbReference type="GO" id="GO:0001228">
    <property type="term" value="F:DNA-binding transcription activator activity, RNA polymerase II-specific"/>
    <property type="evidence" value="ECO:0007669"/>
    <property type="project" value="Ensembl"/>
</dbReference>
<dbReference type="GO" id="GO:0000981">
    <property type="term" value="F:DNA-binding transcription factor activity, RNA polymerase II-specific"/>
    <property type="evidence" value="ECO:0000318"/>
    <property type="project" value="GO_Central"/>
</dbReference>
<dbReference type="GO" id="GO:0140297">
    <property type="term" value="F:DNA-binding transcription factor binding"/>
    <property type="evidence" value="ECO:0007669"/>
    <property type="project" value="Ensembl"/>
</dbReference>
<dbReference type="GO" id="GO:0042802">
    <property type="term" value="F:identical protein binding"/>
    <property type="evidence" value="ECO:0007669"/>
    <property type="project" value="Ensembl"/>
</dbReference>
<dbReference type="GO" id="GO:0000978">
    <property type="term" value="F:RNA polymerase II cis-regulatory region sequence-specific DNA binding"/>
    <property type="evidence" value="ECO:0000318"/>
    <property type="project" value="GO_Central"/>
</dbReference>
<dbReference type="GO" id="GO:0030183">
    <property type="term" value="P:B cell differentiation"/>
    <property type="evidence" value="ECO:0007669"/>
    <property type="project" value="Ensembl"/>
</dbReference>
<dbReference type="GO" id="GO:0006351">
    <property type="term" value="P:DNA-templated transcription"/>
    <property type="evidence" value="ECO:0007669"/>
    <property type="project" value="InterPro"/>
</dbReference>
<dbReference type="GO" id="GO:0043353">
    <property type="term" value="P:enucleate erythrocyte differentiation"/>
    <property type="evidence" value="ECO:0007669"/>
    <property type="project" value="Ensembl"/>
</dbReference>
<dbReference type="GO" id="GO:0016071">
    <property type="term" value="P:mRNA metabolic process"/>
    <property type="evidence" value="ECO:0007669"/>
    <property type="project" value="Ensembl"/>
</dbReference>
<dbReference type="GO" id="GO:0042267">
    <property type="term" value="P:natural killer cell mediated cytotoxicity"/>
    <property type="evidence" value="ECO:0007669"/>
    <property type="project" value="Ensembl"/>
</dbReference>
<dbReference type="GO" id="GO:0045739">
    <property type="term" value="P:positive regulation of DNA repair"/>
    <property type="evidence" value="ECO:0007669"/>
    <property type="project" value="Ensembl"/>
</dbReference>
<dbReference type="GO" id="GO:0032729">
    <property type="term" value="P:positive regulation of type II interferon production"/>
    <property type="evidence" value="ECO:0007669"/>
    <property type="project" value="Ensembl"/>
</dbReference>
<dbReference type="GO" id="GO:0006357">
    <property type="term" value="P:regulation of transcription by RNA polymerase II"/>
    <property type="evidence" value="ECO:0000318"/>
    <property type="project" value="GO_Central"/>
</dbReference>
<dbReference type="CDD" id="cd14713">
    <property type="entry name" value="bZIP_CEBPG"/>
    <property type="match status" value="1"/>
</dbReference>
<dbReference type="FunFam" id="1.20.5.170:FF:000055">
    <property type="entry name" value="CCAAT/enhancer-binding protein gamma"/>
    <property type="match status" value="1"/>
</dbReference>
<dbReference type="Gene3D" id="1.20.5.170">
    <property type="match status" value="1"/>
</dbReference>
<dbReference type="InterPro" id="IPR004827">
    <property type="entry name" value="bZIP"/>
</dbReference>
<dbReference type="InterPro" id="IPR046347">
    <property type="entry name" value="bZIP_sf"/>
</dbReference>
<dbReference type="InterPro" id="IPR031106">
    <property type="entry name" value="C/EBP"/>
</dbReference>
<dbReference type="PANTHER" id="PTHR23334">
    <property type="entry name" value="CCAAT/ENHANCER BINDING PROTEIN"/>
    <property type="match status" value="1"/>
</dbReference>
<dbReference type="PANTHER" id="PTHR23334:SF69">
    <property type="entry name" value="CCAAT_ENHANCER-BINDING PROTEIN GAMMA"/>
    <property type="match status" value="1"/>
</dbReference>
<dbReference type="Pfam" id="PF07716">
    <property type="entry name" value="bZIP_2"/>
    <property type="match status" value="1"/>
</dbReference>
<dbReference type="SMART" id="SM00338">
    <property type="entry name" value="BRLZ"/>
    <property type="match status" value="1"/>
</dbReference>
<dbReference type="SUPFAM" id="SSF57959">
    <property type="entry name" value="Leucine zipper domain"/>
    <property type="match status" value="1"/>
</dbReference>
<dbReference type="PROSITE" id="PS50217">
    <property type="entry name" value="BZIP"/>
    <property type="match status" value="1"/>
</dbReference>
<accession>Q3T0B9</accession>
<organism>
    <name type="scientific">Bos taurus</name>
    <name type="common">Bovine</name>
    <dbReference type="NCBI Taxonomy" id="9913"/>
    <lineage>
        <taxon>Eukaryota</taxon>
        <taxon>Metazoa</taxon>
        <taxon>Chordata</taxon>
        <taxon>Craniata</taxon>
        <taxon>Vertebrata</taxon>
        <taxon>Euteleostomi</taxon>
        <taxon>Mammalia</taxon>
        <taxon>Eutheria</taxon>
        <taxon>Laurasiatheria</taxon>
        <taxon>Artiodactyla</taxon>
        <taxon>Ruminantia</taxon>
        <taxon>Pecora</taxon>
        <taxon>Bovidae</taxon>
        <taxon>Bovinae</taxon>
        <taxon>Bos</taxon>
    </lineage>
</organism>
<reference key="1">
    <citation type="submission" date="2005-08" db="EMBL/GenBank/DDBJ databases">
        <authorList>
            <consortium name="NIH - Mammalian Gene Collection (MGC) project"/>
        </authorList>
    </citation>
    <scope>NUCLEOTIDE SEQUENCE [LARGE SCALE MRNA]</scope>
    <source>
        <strain>Crossbred X Angus</strain>
        <tissue>Ileum</tissue>
    </source>
</reference>
<protein>
    <recommendedName>
        <fullName>CCAAT/enhancer-binding protein gamma</fullName>
        <shortName>C/EBP gamma</shortName>
    </recommendedName>
</protein>
<name>CEBPG_BOVIN</name>
<gene>
    <name type="primary">CEBPG</name>
</gene>
<keyword id="KW-0010">Activator</keyword>
<keyword id="KW-0238">DNA-binding</keyword>
<keyword id="KW-1017">Isopeptide bond</keyword>
<keyword id="KW-0539">Nucleus</keyword>
<keyword id="KW-1185">Reference proteome</keyword>
<keyword id="KW-0804">Transcription</keyword>
<keyword id="KW-0805">Transcription regulation</keyword>
<keyword id="KW-0832">Ubl conjugation</keyword>
<evidence type="ECO:0000250" key="1">
    <source>
        <dbReference type="UniProtKB" id="P26801"/>
    </source>
</evidence>
<evidence type="ECO:0000250" key="2">
    <source>
        <dbReference type="UniProtKB" id="P53567"/>
    </source>
</evidence>
<evidence type="ECO:0000250" key="3">
    <source>
        <dbReference type="UniProtKB" id="P53568"/>
    </source>
</evidence>
<evidence type="ECO:0000255" key="4">
    <source>
        <dbReference type="PROSITE-ProRule" id="PRU00978"/>
    </source>
</evidence>
<evidence type="ECO:0000256" key="5">
    <source>
        <dbReference type="SAM" id="MobiDB-lite"/>
    </source>
</evidence>
<evidence type="ECO:0000305" key="6"/>
<feature type="chain" id="PRO_0000247011" description="CCAAT/enhancer-binding protein gamma">
    <location>
        <begin position="1"/>
        <end position="149"/>
    </location>
</feature>
<feature type="domain" description="bZIP" evidence="4">
    <location>
        <begin position="62"/>
        <end position="125"/>
    </location>
</feature>
<feature type="region of interest" description="Disordered" evidence="5">
    <location>
        <begin position="1"/>
        <end position="92"/>
    </location>
</feature>
<feature type="region of interest" description="Basic motif" evidence="4">
    <location>
        <begin position="66"/>
        <end position="93"/>
    </location>
</feature>
<feature type="region of interest" description="Leucine-zipper" evidence="4">
    <location>
        <begin position="97"/>
        <end position="118"/>
    </location>
</feature>
<feature type="region of interest" description="Disordered" evidence="5">
    <location>
        <begin position="128"/>
        <end position="149"/>
    </location>
</feature>
<feature type="compositionally biased region" description="Polar residues" evidence="5">
    <location>
        <begin position="1"/>
        <end position="12"/>
    </location>
</feature>
<feature type="compositionally biased region" description="Low complexity" evidence="5">
    <location>
        <begin position="28"/>
        <end position="37"/>
    </location>
</feature>
<feature type="compositionally biased region" description="Basic and acidic residues" evidence="5">
    <location>
        <begin position="56"/>
        <end position="72"/>
    </location>
</feature>
<feature type="compositionally biased region" description="Polar residues" evidence="5">
    <location>
        <begin position="131"/>
        <end position="149"/>
    </location>
</feature>
<feature type="cross-link" description="Glycyl lysine isopeptide (Lys-Gly) (interchain with G-Cter in SUMO2)" evidence="2">
    <location>
        <position position="3"/>
    </location>
</feature>
<proteinExistence type="evidence at transcript level"/>